<proteinExistence type="inferred from homology"/>
<organism>
    <name type="scientific">Staphylococcus aureus (strain MSSA476)</name>
    <dbReference type="NCBI Taxonomy" id="282459"/>
    <lineage>
        <taxon>Bacteria</taxon>
        <taxon>Bacillati</taxon>
        <taxon>Bacillota</taxon>
        <taxon>Bacilli</taxon>
        <taxon>Bacillales</taxon>
        <taxon>Staphylococcaceae</taxon>
        <taxon>Staphylococcus</taxon>
    </lineage>
</organism>
<gene>
    <name type="primary">mnhB1</name>
    <name type="ordered locus">SAS0821</name>
</gene>
<dbReference type="EMBL" id="BX571857">
    <property type="protein sequence ID" value="CAG42596.1"/>
    <property type="molecule type" value="Genomic_DNA"/>
</dbReference>
<dbReference type="RefSeq" id="WP_001081626.1">
    <property type="nucleotide sequence ID" value="NC_002953.3"/>
</dbReference>
<dbReference type="SMR" id="Q6GAX5"/>
<dbReference type="GeneID" id="66839149"/>
<dbReference type="KEGG" id="sas:SAS0821"/>
<dbReference type="HOGENOM" id="CLU_101659_1_1_9"/>
<dbReference type="GO" id="GO:0005886">
    <property type="term" value="C:plasma membrane"/>
    <property type="evidence" value="ECO:0007669"/>
    <property type="project" value="UniProtKB-SubCell"/>
</dbReference>
<dbReference type="GO" id="GO:0015297">
    <property type="term" value="F:antiporter activity"/>
    <property type="evidence" value="ECO:0007669"/>
    <property type="project" value="UniProtKB-KW"/>
</dbReference>
<dbReference type="GO" id="GO:0008324">
    <property type="term" value="F:monoatomic cation transmembrane transporter activity"/>
    <property type="evidence" value="ECO:0007669"/>
    <property type="project" value="InterPro"/>
</dbReference>
<dbReference type="GO" id="GO:1902600">
    <property type="term" value="P:proton transmembrane transport"/>
    <property type="evidence" value="ECO:0007669"/>
    <property type="project" value="UniProtKB-KW"/>
</dbReference>
<dbReference type="GO" id="GO:0006814">
    <property type="term" value="P:sodium ion transport"/>
    <property type="evidence" value="ECO:0007669"/>
    <property type="project" value="UniProtKB-KW"/>
</dbReference>
<dbReference type="InterPro" id="IPR050622">
    <property type="entry name" value="CPA3_antiporter_subunitB"/>
</dbReference>
<dbReference type="InterPro" id="IPR005281">
    <property type="entry name" value="CPA3_sub_B"/>
</dbReference>
<dbReference type="InterPro" id="IPR007182">
    <property type="entry name" value="MnhB"/>
</dbReference>
<dbReference type="NCBIfam" id="TIGR00943">
    <property type="entry name" value="2a6301s02"/>
    <property type="match status" value="1"/>
</dbReference>
<dbReference type="NCBIfam" id="NF009223">
    <property type="entry name" value="PRK12573.1"/>
    <property type="match status" value="1"/>
</dbReference>
<dbReference type="PANTHER" id="PTHR33932">
    <property type="entry name" value="NA(+)/H(+) ANTIPORTER SUBUNIT B"/>
    <property type="match status" value="1"/>
</dbReference>
<dbReference type="PANTHER" id="PTHR33932:SF4">
    <property type="entry name" value="NA(+)_H(+) ANTIPORTER SUBUNIT B"/>
    <property type="match status" value="1"/>
</dbReference>
<dbReference type="Pfam" id="PF04039">
    <property type="entry name" value="MnhB"/>
    <property type="match status" value="1"/>
</dbReference>
<accession>Q6GAX5</accession>
<keyword id="KW-0050">Antiport</keyword>
<keyword id="KW-1003">Cell membrane</keyword>
<keyword id="KW-0375">Hydrogen ion transport</keyword>
<keyword id="KW-0406">Ion transport</keyword>
<keyword id="KW-0472">Membrane</keyword>
<keyword id="KW-0915">Sodium</keyword>
<keyword id="KW-0739">Sodium transport</keyword>
<keyword id="KW-0812">Transmembrane</keyword>
<keyword id="KW-1133">Transmembrane helix</keyword>
<keyword id="KW-0813">Transport</keyword>
<comment type="function">
    <text evidence="1">Mnh complex is a Na(+)/H(+) antiporter involved in Na(+) excretion.</text>
</comment>
<comment type="subunit">
    <text evidence="1">May form a heterooligomeric complex that consists of seven subunits: mnhA1, mnhB1, mnhC1, mnhD1, mnhE1, mnhF1 and mnhG1.</text>
</comment>
<comment type="subcellular location">
    <subcellularLocation>
        <location evidence="3">Cell membrane</location>
        <topology evidence="3">Multi-pass membrane protein</topology>
    </subcellularLocation>
</comment>
<comment type="similarity">
    <text evidence="3">Belongs to the CPA3 antiporters (TC 2.A.63) subunit B family.</text>
</comment>
<evidence type="ECO:0000250" key="1"/>
<evidence type="ECO:0000255" key="2"/>
<evidence type="ECO:0000305" key="3"/>
<feature type="chain" id="PRO_0000088860" description="Na(+)/H(+) antiporter subunit B1">
    <location>
        <begin position="1"/>
        <end position="142"/>
    </location>
</feature>
<feature type="transmembrane region" description="Helical" evidence="2">
    <location>
        <begin position="9"/>
        <end position="31"/>
    </location>
</feature>
<feature type="transmembrane region" description="Helical" evidence="2">
    <location>
        <begin position="35"/>
        <end position="57"/>
    </location>
</feature>
<feature type="transmembrane region" description="Helical" evidence="2">
    <location>
        <begin position="70"/>
        <end position="92"/>
    </location>
</feature>
<feature type="transmembrane region" description="Helical" evidence="2">
    <location>
        <begin position="116"/>
        <end position="138"/>
    </location>
</feature>
<name>MNHB1_STAAS</name>
<reference key="1">
    <citation type="journal article" date="2004" name="Proc. Natl. Acad. Sci. U.S.A.">
        <title>Complete genomes of two clinical Staphylococcus aureus strains: evidence for the rapid evolution of virulence and drug resistance.</title>
        <authorList>
            <person name="Holden M.T.G."/>
            <person name="Feil E.J."/>
            <person name="Lindsay J.A."/>
            <person name="Peacock S.J."/>
            <person name="Day N.P.J."/>
            <person name="Enright M.C."/>
            <person name="Foster T.J."/>
            <person name="Moore C.E."/>
            <person name="Hurst L."/>
            <person name="Atkin R."/>
            <person name="Barron A."/>
            <person name="Bason N."/>
            <person name="Bentley S.D."/>
            <person name="Chillingworth C."/>
            <person name="Chillingworth T."/>
            <person name="Churcher C."/>
            <person name="Clark L."/>
            <person name="Corton C."/>
            <person name="Cronin A."/>
            <person name="Doggett J."/>
            <person name="Dowd L."/>
            <person name="Feltwell T."/>
            <person name="Hance Z."/>
            <person name="Harris B."/>
            <person name="Hauser H."/>
            <person name="Holroyd S."/>
            <person name="Jagels K."/>
            <person name="James K.D."/>
            <person name="Lennard N."/>
            <person name="Line A."/>
            <person name="Mayes R."/>
            <person name="Moule S."/>
            <person name="Mungall K."/>
            <person name="Ormond D."/>
            <person name="Quail M.A."/>
            <person name="Rabbinowitsch E."/>
            <person name="Rutherford K.M."/>
            <person name="Sanders M."/>
            <person name="Sharp S."/>
            <person name="Simmonds M."/>
            <person name="Stevens K."/>
            <person name="Whitehead S."/>
            <person name="Barrell B.G."/>
            <person name="Spratt B.G."/>
            <person name="Parkhill J."/>
        </authorList>
    </citation>
    <scope>NUCLEOTIDE SEQUENCE [LARGE SCALE GENOMIC DNA]</scope>
    <source>
        <strain>MSSA476</strain>
    </source>
</reference>
<protein>
    <recommendedName>
        <fullName>Na(+)/H(+) antiporter subunit B1</fullName>
    </recommendedName>
    <alternativeName>
        <fullName>Mnh complex subunit B1</fullName>
    </alternativeName>
</protein>
<sequence length="142" mass="15682">MNRQQNDLILQFAAVIIFFMVMVFGFSLFLAGHYTPGGGFVGGLLFASSLVIITIAFDIETMRKIFPLDFKILIGIGLVFCIATPIASWFLGKNFFTHVTFDIPLFILEPVHMTTAVFFDFGVLCAVVGTVMTIIISIGENE</sequence>